<sequence>MAEPELEELAELVRRLSVVHGRVTLSSGKEADYYVDLRRATLHHRASALIGRLMRELTSDWDYAVVGGLTLGADPVATAIMHAPGRPIDAFVVRKSAKTHGLQRLIEGSEVAGKRVLVVEDTSTTGNSALTAVRAVQQAGGQVLGVATVVDRATGAAEAIEAEGLPYRSVLGLADLGLG</sequence>
<accession>A0QLX9</accession>
<protein>
    <recommendedName>
        <fullName evidence="1">Orotate phosphoribosyltransferase</fullName>
        <shortName evidence="1">OPRT</shortName>
        <shortName evidence="1">OPRTase</shortName>
        <ecNumber evidence="1">2.4.2.10</ecNumber>
    </recommendedName>
</protein>
<reference key="1">
    <citation type="submission" date="2006-10" db="EMBL/GenBank/DDBJ databases">
        <authorList>
            <person name="Fleischmann R.D."/>
            <person name="Dodson R.J."/>
            <person name="Haft D.H."/>
            <person name="Merkel J.S."/>
            <person name="Nelson W.C."/>
            <person name="Fraser C.M."/>
        </authorList>
    </citation>
    <scope>NUCLEOTIDE SEQUENCE [LARGE SCALE GENOMIC DNA]</scope>
    <source>
        <strain>104</strain>
    </source>
</reference>
<comment type="function">
    <text evidence="1">Catalyzes the transfer of a ribosyl phosphate group from 5-phosphoribose 1-diphosphate to orotate, leading to the formation of orotidine monophosphate (OMP).</text>
</comment>
<comment type="catalytic activity">
    <reaction evidence="1">
        <text>orotidine 5'-phosphate + diphosphate = orotate + 5-phospho-alpha-D-ribose 1-diphosphate</text>
        <dbReference type="Rhea" id="RHEA:10380"/>
        <dbReference type="ChEBI" id="CHEBI:30839"/>
        <dbReference type="ChEBI" id="CHEBI:33019"/>
        <dbReference type="ChEBI" id="CHEBI:57538"/>
        <dbReference type="ChEBI" id="CHEBI:58017"/>
        <dbReference type="EC" id="2.4.2.10"/>
    </reaction>
</comment>
<comment type="cofactor">
    <cofactor evidence="1">
        <name>Mg(2+)</name>
        <dbReference type="ChEBI" id="CHEBI:18420"/>
    </cofactor>
</comment>
<comment type="pathway">
    <text evidence="1">Pyrimidine metabolism; UMP biosynthesis via de novo pathway; UMP from orotate: step 1/2.</text>
</comment>
<comment type="subunit">
    <text evidence="1">Homodimer.</text>
</comment>
<comment type="similarity">
    <text evidence="1">Belongs to the purine/pyrimidine phosphoribosyltransferase family. PyrE subfamily.</text>
</comment>
<evidence type="ECO:0000255" key="1">
    <source>
        <dbReference type="HAMAP-Rule" id="MF_01208"/>
    </source>
</evidence>
<proteinExistence type="inferred from homology"/>
<organism>
    <name type="scientific">Mycobacterium avium (strain 104)</name>
    <dbReference type="NCBI Taxonomy" id="243243"/>
    <lineage>
        <taxon>Bacteria</taxon>
        <taxon>Bacillati</taxon>
        <taxon>Actinomycetota</taxon>
        <taxon>Actinomycetes</taxon>
        <taxon>Mycobacteriales</taxon>
        <taxon>Mycobacteriaceae</taxon>
        <taxon>Mycobacterium</taxon>
        <taxon>Mycobacterium avium complex (MAC)</taxon>
    </lineage>
</organism>
<name>PYRE_MYCA1</name>
<gene>
    <name evidence="1" type="primary">pyrE</name>
    <name type="ordered locus">MAV_4790</name>
</gene>
<keyword id="KW-0328">Glycosyltransferase</keyword>
<keyword id="KW-0460">Magnesium</keyword>
<keyword id="KW-0665">Pyrimidine biosynthesis</keyword>
<keyword id="KW-0808">Transferase</keyword>
<feature type="chain" id="PRO_1000066256" description="Orotate phosphoribosyltransferase">
    <location>
        <begin position="1"/>
        <end position="179"/>
    </location>
</feature>
<feature type="binding site" evidence="1">
    <location>
        <position position="94"/>
    </location>
    <ligand>
        <name>5-phospho-alpha-D-ribose 1-diphosphate</name>
        <dbReference type="ChEBI" id="CHEBI:58017"/>
        <note>ligand shared between dimeric partners</note>
    </ligand>
</feature>
<feature type="binding site" description="in other chain" evidence="1">
    <location>
        <position position="95"/>
    </location>
    <ligand>
        <name>5-phospho-alpha-D-ribose 1-diphosphate</name>
        <dbReference type="ChEBI" id="CHEBI:58017"/>
        <note>ligand shared between dimeric partners</note>
    </ligand>
</feature>
<feature type="binding site" evidence="1">
    <location>
        <position position="98"/>
    </location>
    <ligand>
        <name>5-phospho-alpha-D-ribose 1-diphosphate</name>
        <dbReference type="ChEBI" id="CHEBI:58017"/>
        <note>ligand shared between dimeric partners</note>
    </ligand>
</feature>
<feature type="binding site" evidence="1">
    <location>
        <position position="100"/>
    </location>
    <ligand>
        <name>5-phospho-alpha-D-ribose 1-diphosphate</name>
        <dbReference type="ChEBI" id="CHEBI:58017"/>
        <note>ligand shared between dimeric partners</note>
    </ligand>
</feature>
<feature type="binding site" description="in other chain" evidence="1">
    <location>
        <begin position="120"/>
        <end position="128"/>
    </location>
    <ligand>
        <name>5-phospho-alpha-D-ribose 1-diphosphate</name>
        <dbReference type="ChEBI" id="CHEBI:58017"/>
        <note>ligand shared between dimeric partners</note>
    </ligand>
</feature>
<feature type="binding site" evidence="1">
    <location>
        <position position="124"/>
    </location>
    <ligand>
        <name>orotate</name>
        <dbReference type="ChEBI" id="CHEBI:30839"/>
    </ligand>
</feature>
<feature type="binding site" evidence="1">
    <location>
        <position position="152"/>
    </location>
    <ligand>
        <name>orotate</name>
        <dbReference type="ChEBI" id="CHEBI:30839"/>
    </ligand>
</feature>
<dbReference type="EC" id="2.4.2.10" evidence="1"/>
<dbReference type="EMBL" id="CP000479">
    <property type="protein sequence ID" value="ABK68560.1"/>
    <property type="molecule type" value="Genomic_DNA"/>
</dbReference>
<dbReference type="RefSeq" id="WP_011726253.1">
    <property type="nucleotide sequence ID" value="NC_008595.1"/>
</dbReference>
<dbReference type="SMR" id="A0QLX9"/>
<dbReference type="KEGG" id="mav:MAV_4790"/>
<dbReference type="HOGENOM" id="CLU_074878_2_1_11"/>
<dbReference type="UniPathway" id="UPA00070">
    <property type="reaction ID" value="UER00119"/>
</dbReference>
<dbReference type="Proteomes" id="UP000001574">
    <property type="component" value="Chromosome"/>
</dbReference>
<dbReference type="GO" id="GO:0000287">
    <property type="term" value="F:magnesium ion binding"/>
    <property type="evidence" value="ECO:0007669"/>
    <property type="project" value="UniProtKB-UniRule"/>
</dbReference>
<dbReference type="GO" id="GO:0004588">
    <property type="term" value="F:orotate phosphoribosyltransferase activity"/>
    <property type="evidence" value="ECO:0007669"/>
    <property type="project" value="UniProtKB-UniRule"/>
</dbReference>
<dbReference type="GO" id="GO:0044205">
    <property type="term" value="P:'de novo' UMP biosynthetic process"/>
    <property type="evidence" value="ECO:0007669"/>
    <property type="project" value="UniProtKB-UniRule"/>
</dbReference>
<dbReference type="GO" id="GO:0019856">
    <property type="term" value="P:pyrimidine nucleobase biosynthetic process"/>
    <property type="evidence" value="ECO:0007669"/>
    <property type="project" value="TreeGrafter"/>
</dbReference>
<dbReference type="CDD" id="cd06223">
    <property type="entry name" value="PRTases_typeI"/>
    <property type="match status" value="1"/>
</dbReference>
<dbReference type="FunFam" id="3.40.50.2020:FF:000029">
    <property type="entry name" value="Orotate phosphoribosyltransferase"/>
    <property type="match status" value="1"/>
</dbReference>
<dbReference type="Gene3D" id="3.40.50.2020">
    <property type="match status" value="1"/>
</dbReference>
<dbReference type="HAMAP" id="MF_01208">
    <property type="entry name" value="PyrE"/>
    <property type="match status" value="1"/>
</dbReference>
<dbReference type="InterPro" id="IPR023031">
    <property type="entry name" value="OPRT"/>
</dbReference>
<dbReference type="InterPro" id="IPR004467">
    <property type="entry name" value="Or_phspho_trans_dom"/>
</dbReference>
<dbReference type="InterPro" id="IPR000836">
    <property type="entry name" value="PRibTrfase_dom"/>
</dbReference>
<dbReference type="InterPro" id="IPR029057">
    <property type="entry name" value="PRTase-like"/>
</dbReference>
<dbReference type="NCBIfam" id="TIGR00336">
    <property type="entry name" value="pyrE"/>
    <property type="match status" value="1"/>
</dbReference>
<dbReference type="PANTHER" id="PTHR19278">
    <property type="entry name" value="OROTATE PHOSPHORIBOSYLTRANSFERASE"/>
    <property type="match status" value="1"/>
</dbReference>
<dbReference type="PANTHER" id="PTHR19278:SF9">
    <property type="entry name" value="URIDINE 5'-MONOPHOSPHATE SYNTHASE"/>
    <property type="match status" value="1"/>
</dbReference>
<dbReference type="Pfam" id="PF00156">
    <property type="entry name" value="Pribosyltran"/>
    <property type="match status" value="1"/>
</dbReference>
<dbReference type="SUPFAM" id="SSF53271">
    <property type="entry name" value="PRTase-like"/>
    <property type="match status" value="1"/>
</dbReference>